<name>MCF2_HUMAN</name>
<reference key="1">
    <citation type="journal article" date="1988" name="EMBO J.">
        <title>Molecular cloning and characterization of the human dbl proto-oncogene: evidence that its overexpression is sufficient to transform NIH/3T3 cells.</title>
        <authorList>
            <person name="Ron D."/>
            <person name="Tronick S.R."/>
            <person name="Aaronson S.A."/>
            <person name="Eva A."/>
        </authorList>
    </citation>
    <scope>NUCLEOTIDE SEQUENCE [MRNA] (ISOFORM 1)</scope>
    <source>
        <tissue>Brain</tissue>
    </source>
</reference>
<reference key="2">
    <citation type="submission" date="1989-06" db="EMBL/GenBank/DDBJ databases">
        <authorList>
            <person name="Ron D."/>
        </authorList>
    </citation>
    <scope>SEQUENCE REVISION</scope>
</reference>
<reference key="3">
    <citation type="journal article" date="2002" name="Biochem. Biophys. Res. Commun.">
        <title>Alternative splicing variants of the human DBL (MCF-2) proto-oncogene.</title>
        <authorList>
            <person name="Komai K."/>
            <person name="Okayama R."/>
            <person name="Kitagawa M."/>
            <person name="Yagi H."/>
            <person name="Chihara K."/>
            <person name="Shiozawa S."/>
        </authorList>
    </citation>
    <scope>NUCLEOTIDE SEQUENCE [MRNA] (ISOFORMS 2; 3 AND 4)</scope>
    <scope>TISSUE SPECIFICITY</scope>
    <scope>CHARACTERIZATION</scope>
</reference>
<reference key="4">
    <citation type="submission" date="1999-09" db="EMBL/GenBank/DDBJ databases">
        <authorList>
            <person name="Rhodes S."/>
            <person name="Huckle E."/>
        </authorList>
    </citation>
    <scope>NUCLEOTIDE SEQUENCE [LARGE SCALE MRNA] (ISOFORM 3)</scope>
</reference>
<reference key="5">
    <citation type="journal article" date="2004" name="Nat. Genet.">
        <title>Complete sequencing and characterization of 21,243 full-length human cDNAs.</title>
        <authorList>
            <person name="Ota T."/>
            <person name="Suzuki Y."/>
            <person name="Nishikawa T."/>
            <person name="Otsuki T."/>
            <person name="Sugiyama T."/>
            <person name="Irie R."/>
            <person name="Wakamatsu A."/>
            <person name="Hayashi K."/>
            <person name="Sato H."/>
            <person name="Nagai K."/>
            <person name="Kimura K."/>
            <person name="Makita H."/>
            <person name="Sekine M."/>
            <person name="Obayashi M."/>
            <person name="Nishi T."/>
            <person name="Shibahara T."/>
            <person name="Tanaka T."/>
            <person name="Ishii S."/>
            <person name="Yamamoto J."/>
            <person name="Saito K."/>
            <person name="Kawai Y."/>
            <person name="Isono Y."/>
            <person name="Nakamura Y."/>
            <person name="Nagahari K."/>
            <person name="Murakami K."/>
            <person name="Yasuda T."/>
            <person name="Iwayanagi T."/>
            <person name="Wagatsuma M."/>
            <person name="Shiratori A."/>
            <person name="Sudo H."/>
            <person name="Hosoiri T."/>
            <person name="Kaku Y."/>
            <person name="Kodaira H."/>
            <person name="Kondo H."/>
            <person name="Sugawara M."/>
            <person name="Takahashi M."/>
            <person name="Kanda K."/>
            <person name="Yokoi T."/>
            <person name="Furuya T."/>
            <person name="Kikkawa E."/>
            <person name="Omura Y."/>
            <person name="Abe K."/>
            <person name="Kamihara K."/>
            <person name="Katsuta N."/>
            <person name="Sato K."/>
            <person name="Tanikawa M."/>
            <person name="Yamazaki M."/>
            <person name="Ninomiya K."/>
            <person name="Ishibashi T."/>
            <person name="Yamashita H."/>
            <person name="Murakawa K."/>
            <person name="Fujimori K."/>
            <person name="Tanai H."/>
            <person name="Kimata M."/>
            <person name="Watanabe M."/>
            <person name="Hiraoka S."/>
            <person name="Chiba Y."/>
            <person name="Ishida S."/>
            <person name="Ono Y."/>
            <person name="Takiguchi S."/>
            <person name="Watanabe S."/>
            <person name="Yosida M."/>
            <person name="Hotuta T."/>
            <person name="Kusano J."/>
            <person name="Kanehori K."/>
            <person name="Takahashi-Fujii A."/>
            <person name="Hara H."/>
            <person name="Tanase T.-O."/>
            <person name="Nomura Y."/>
            <person name="Togiya S."/>
            <person name="Komai F."/>
            <person name="Hara R."/>
            <person name="Takeuchi K."/>
            <person name="Arita M."/>
            <person name="Imose N."/>
            <person name="Musashino K."/>
            <person name="Yuuki H."/>
            <person name="Oshima A."/>
            <person name="Sasaki N."/>
            <person name="Aotsuka S."/>
            <person name="Yoshikawa Y."/>
            <person name="Matsunawa H."/>
            <person name="Ichihara T."/>
            <person name="Shiohata N."/>
            <person name="Sano S."/>
            <person name="Moriya S."/>
            <person name="Momiyama H."/>
            <person name="Satoh N."/>
            <person name="Takami S."/>
            <person name="Terashima Y."/>
            <person name="Suzuki O."/>
            <person name="Nakagawa S."/>
            <person name="Senoh A."/>
            <person name="Mizoguchi H."/>
            <person name="Goto Y."/>
            <person name="Shimizu F."/>
            <person name="Wakebe H."/>
            <person name="Hishigaki H."/>
            <person name="Watanabe T."/>
            <person name="Sugiyama A."/>
            <person name="Takemoto M."/>
            <person name="Kawakami B."/>
            <person name="Yamazaki M."/>
            <person name="Watanabe K."/>
            <person name="Kumagai A."/>
            <person name="Itakura S."/>
            <person name="Fukuzumi Y."/>
            <person name="Fujimori Y."/>
            <person name="Komiyama M."/>
            <person name="Tashiro H."/>
            <person name="Tanigami A."/>
            <person name="Fujiwara T."/>
            <person name="Ono T."/>
            <person name="Yamada K."/>
            <person name="Fujii Y."/>
            <person name="Ozaki K."/>
            <person name="Hirao M."/>
            <person name="Ohmori Y."/>
            <person name="Kawabata A."/>
            <person name="Hikiji T."/>
            <person name="Kobatake N."/>
            <person name="Inagaki H."/>
            <person name="Ikema Y."/>
            <person name="Okamoto S."/>
            <person name="Okitani R."/>
            <person name="Kawakami T."/>
            <person name="Noguchi S."/>
            <person name="Itoh T."/>
            <person name="Shigeta K."/>
            <person name="Senba T."/>
            <person name="Matsumura K."/>
            <person name="Nakajima Y."/>
            <person name="Mizuno T."/>
            <person name="Morinaga M."/>
            <person name="Sasaki M."/>
            <person name="Togashi T."/>
            <person name="Oyama M."/>
            <person name="Hata H."/>
            <person name="Watanabe M."/>
            <person name="Komatsu T."/>
            <person name="Mizushima-Sugano J."/>
            <person name="Satoh T."/>
            <person name="Shirai Y."/>
            <person name="Takahashi Y."/>
            <person name="Nakagawa K."/>
            <person name="Okumura K."/>
            <person name="Nagase T."/>
            <person name="Nomura N."/>
            <person name="Kikuchi H."/>
            <person name="Masuho Y."/>
            <person name="Yamashita R."/>
            <person name="Nakai K."/>
            <person name="Yada T."/>
            <person name="Nakamura Y."/>
            <person name="Ohara O."/>
            <person name="Isogai T."/>
            <person name="Sugano S."/>
        </authorList>
    </citation>
    <scope>NUCLEOTIDE SEQUENCE [LARGE SCALE MRNA] (ISOFORMS 5 AND 6)</scope>
    <source>
        <tissue>Testis</tissue>
        <tissue>Thalamus</tissue>
    </source>
</reference>
<reference key="6">
    <citation type="journal article" date="2005" name="Nature">
        <title>The DNA sequence of the human X chromosome.</title>
        <authorList>
            <person name="Ross M.T."/>
            <person name="Grafham D.V."/>
            <person name="Coffey A.J."/>
            <person name="Scherer S."/>
            <person name="McLay K."/>
            <person name="Muzny D."/>
            <person name="Platzer M."/>
            <person name="Howell G.R."/>
            <person name="Burrows C."/>
            <person name="Bird C.P."/>
            <person name="Frankish A."/>
            <person name="Lovell F.L."/>
            <person name="Howe K.L."/>
            <person name="Ashurst J.L."/>
            <person name="Fulton R.S."/>
            <person name="Sudbrak R."/>
            <person name="Wen G."/>
            <person name="Jones M.C."/>
            <person name="Hurles M.E."/>
            <person name="Andrews T.D."/>
            <person name="Scott C.E."/>
            <person name="Searle S."/>
            <person name="Ramser J."/>
            <person name="Whittaker A."/>
            <person name="Deadman R."/>
            <person name="Carter N.P."/>
            <person name="Hunt S.E."/>
            <person name="Chen R."/>
            <person name="Cree A."/>
            <person name="Gunaratne P."/>
            <person name="Havlak P."/>
            <person name="Hodgson A."/>
            <person name="Metzker M.L."/>
            <person name="Richards S."/>
            <person name="Scott G."/>
            <person name="Steffen D."/>
            <person name="Sodergren E."/>
            <person name="Wheeler D.A."/>
            <person name="Worley K.C."/>
            <person name="Ainscough R."/>
            <person name="Ambrose K.D."/>
            <person name="Ansari-Lari M.A."/>
            <person name="Aradhya S."/>
            <person name="Ashwell R.I."/>
            <person name="Babbage A.K."/>
            <person name="Bagguley C.L."/>
            <person name="Ballabio A."/>
            <person name="Banerjee R."/>
            <person name="Barker G.E."/>
            <person name="Barlow K.F."/>
            <person name="Barrett I.P."/>
            <person name="Bates K.N."/>
            <person name="Beare D.M."/>
            <person name="Beasley H."/>
            <person name="Beasley O."/>
            <person name="Beck A."/>
            <person name="Bethel G."/>
            <person name="Blechschmidt K."/>
            <person name="Brady N."/>
            <person name="Bray-Allen S."/>
            <person name="Bridgeman A.M."/>
            <person name="Brown A.J."/>
            <person name="Brown M.J."/>
            <person name="Bonnin D."/>
            <person name="Bruford E.A."/>
            <person name="Buhay C."/>
            <person name="Burch P."/>
            <person name="Burford D."/>
            <person name="Burgess J."/>
            <person name="Burrill W."/>
            <person name="Burton J."/>
            <person name="Bye J.M."/>
            <person name="Carder C."/>
            <person name="Carrel L."/>
            <person name="Chako J."/>
            <person name="Chapman J.C."/>
            <person name="Chavez D."/>
            <person name="Chen E."/>
            <person name="Chen G."/>
            <person name="Chen Y."/>
            <person name="Chen Z."/>
            <person name="Chinault C."/>
            <person name="Ciccodicola A."/>
            <person name="Clark S.Y."/>
            <person name="Clarke G."/>
            <person name="Clee C.M."/>
            <person name="Clegg S."/>
            <person name="Clerc-Blankenburg K."/>
            <person name="Clifford K."/>
            <person name="Cobley V."/>
            <person name="Cole C.G."/>
            <person name="Conquer J.S."/>
            <person name="Corby N."/>
            <person name="Connor R.E."/>
            <person name="David R."/>
            <person name="Davies J."/>
            <person name="Davis C."/>
            <person name="Davis J."/>
            <person name="Delgado O."/>
            <person name="Deshazo D."/>
            <person name="Dhami P."/>
            <person name="Ding Y."/>
            <person name="Dinh H."/>
            <person name="Dodsworth S."/>
            <person name="Draper H."/>
            <person name="Dugan-Rocha S."/>
            <person name="Dunham A."/>
            <person name="Dunn M."/>
            <person name="Durbin K.J."/>
            <person name="Dutta I."/>
            <person name="Eades T."/>
            <person name="Ellwood M."/>
            <person name="Emery-Cohen A."/>
            <person name="Errington H."/>
            <person name="Evans K.L."/>
            <person name="Faulkner L."/>
            <person name="Francis F."/>
            <person name="Frankland J."/>
            <person name="Fraser A.E."/>
            <person name="Galgoczy P."/>
            <person name="Gilbert J."/>
            <person name="Gill R."/>
            <person name="Gloeckner G."/>
            <person name="Gregory S.G."/>
            <person name="Gribble S."/>
            <person name="Griffiths C."/>
            <person name="Grocock R."/>
            <person name="Gu Y."/>
            <person name="Gwilliam R."/>
            <person name="Hamilton C."/>
            <person name="Hart E.A."/>
            <person name="Hawes A."/>
            <person name="Heath P.D."/>
            <person name="Heitmann K."/>
            <person name="Hennig S."/>
            <person name="Hernandez J."/>
            <person name="Hinzmann B."/>
            <person name="Ho S."/>
            <person name="Hoffs M."/>
            <person name="Howden P.J."/>
            <person name="Huckle E.J."/>
            <person name="Hume J."/>
            <person name="Hunt P.J."/>
            <person name="Hunt A.R."/>
            <person name="Isherwood J."/>
            <person name="Jacob L."/>
            <person name="Johnson D."/>
            <person name="Jones S."/>
            <person name="de Jong P.J."/>
            <person name="Joseph S.S."/>
            <person name="Keenan S."/>
            <person name="Kelly S."/>
            <person name="Kershaw J.K."/>
            <person name="Khan Z."/>
            <person name="Kioschis P."/>
            <person name="Klages S."/>
            <person name="Knights A.J."/>
            <person name="Kosiura A."/>
            <person name="Kovar-Smith C."/>
            <person name="Laird G.K."/>
            <person name="Langford C."/>
            <person name="Lawlor S."/>
            <person name="Leversha M."/>
            <person name="Lewis L."/>
            <person name="Liu W."/>
            <person name="Lloyd C."/>
            <person name="Lloyd D.M."/>
            <person name="Loulseged H."/>
            <person name="Loveland J.E."/>
            <person name="Lovell J.D."/>
            <person name="Lozado R."/>
            <person name="Lu J."/>
            <person name="Lyne R."/>
            <person name="Ma J."/>
            <person name="Maheshwari M."/>
            <person name="Matthews L.H."/>
            <person name="McDowall J."/>
            <person name="McLaren S."/>
            <person name="McMurray A."/>
            <person name="Meidl P."/>
            <person name="Meitinger T."/>
            <person name="Milne S."/>
            <person name="Miner G."/>
            <person name="Mistry S.L."/>
            <person name="Morgan M."/>
            <person name="Morris S."/>
            <person name="Mueller I."/>
            <person name="Mullikin J.C."/>
            <person name="Nguyen N."/>
            <person name="Nordsiek G."/>
            <person name="Nyakatura G."/>
            <person name="O'dell C.N."/>
            <person name="Okwuonu G."/>
            <person name="Palmer S."/>
            <person name="Pandian R."/>
            <person name="Parker D."/>
            <person name="Parrish J."/>
            <person name="Pasternak S."/>
            <person name="Patel D."/>
            <person name="Pearce A.V."/>
            <person name="Pearson D.M."/>
            <person name="Pelan S.E."/>
            <person name="Perez L."/>
            <person name="Porter K.M."/>
            <person name="Ramsey Y."/>
            <person name="Reichwald K."/>
            <person name="Rhodes S."/>
            <person name="Ridler K.A."/>
            <person name="Schlessinger D."/>
            <person name="Schueler M.G."/>
            <person name="Sehra H.K."/>
            <person name="Shaw-Smith C."/>
            <person name="Shen H."/>
            <person name="Sheridan E.M."/>
            <person name="Shownkeen R."/>
            <person name="Skuce C.D."/>
            <person name="Smith M.L."/>
            <person name="Sotheran E.C."/>
            <person name="Steingruber H.E."/>
            <person name="Steward C.A."/>
            <person name="Storey R."/>
            <person name="Swann R.M."/>
            <person name="Swarbreck D."/>
            <person name="Tabor P.E."/>
            <person name="Taudien S."/>
            <person name="Taylor T."/>
            <person name="Teague B."/>
            <person name="Thomas K."/>
            <person name="Thorpe A."/>
            <person name="Timms K."/>
            <person name="Tracey A."/>
            <person name="Trevanion S."/>
            <person name="Tromans A.C."/>
            <person name="d'Urso M."/>
            <person name="Verduzco D."/>
            <person name="Villasana D."/>
            <person name="Waldron L."/>
            <person name="Wall M."/>
            <person name="Wang Q."/>
            <person name="Warren J."/>
            <person name="Warry G.L."/>
            <person name="Wei X."/>
            <person name="West A."/>
            <person name="Whitehead S.L."/>
            <person name="Whiteley M.N."/>
            <person name="Wilkinson J.E."/>
            <person name="Willey D.L."/>
            <person name="Williams G."/>
            <person name="Williams L."/>
            <person name="Williamson A."/>
            <person name="Williamson H."/>
            <person name="Wilming L."/>
            <person name="Woodmansey R.L."/>
            <person name="Wray P.W."/>
            <person name="Yen J."/>
            <person name="Zhang J."/>
            <person name="Zhou J."/>
            <person name="Zoghbi H."/>
            <person name="Zorilla S."/>
            <person name="Buck D."/>
            <person name="Reinhardt R."/>
            <person name="Poustka A."/>
            <person name="Rosenthal A."/>
            <person name="Lehrach H."/>
            <person name="Meindl A."/>
            <person name="Minx P.J."/>
            <person name="Hillier L.W."/>
            <person name="Willard H.F."/>
            <person name="Wilson R.K."/>
            <person name="Waterston R.H."/>
            <person name="Rice C.M."/>
            <person name="Vaudin M."/>
            <person name="Coulson A."/>
            <person name="Nelson D.L."/>
            <person name="Weinstock G."/>
            <person name="Sulston J.E."/>
            <person name="Durbin R.M."/>
            <person name="Hubbard T."/>
            <person name="Gibbs R.A."/>
            <person name="Beck S."/>
            <person name="Rogers J."/>
            <person name="Bentley D.R."/>
        </authorList>
    </citation>
    <scope>NUCLEOTIDE SEQUENCE [LARGE SCALE GENOMIC DNA]</scope>
</reference>
<reference key="7">
    <citation type="submission" date="2005-09" db="EMBL/GenBank/DDBJ databases">
        <authorList>
            <person name="Mural R.J."/>
            <person name="Istrail S."/>
            <person name="Sutton G.G."/>
            <person name="Florea L."/>
            <person name="Halpern A.L."/>
            <person name="Mobarry C.M."/>
            <person name="Lippert R."/>
            <person name="Walenz B."/>
            <person name="Shatkay H."/>
            <person name="Dew I."/>
            <person name="Miller J.R."/>
            <person name="Flanigan M.J."/>
            <person name="Edwards N.J."/>
            <person name="Bolanos R."/>
            <person name="Fasulo D."/>
            <person name="Halldorsson B.V."/>
            <person name="Hannenhalli S."/>
            <person name="Turner R."/>
            <person name="Yooseph S."/>
            <person name="Lu F."/>
            <person name="Nusskern D.R."/>
            <person name="Shue B.C."/>
            <person name="Zheng X.H."/>
            <person name="Zhong F."/>
            <person name="Delcher A.L."/>
            <person name="Huson D.H."/>
            <person name="Kravitz S.A."/>
            <person name="Mouchard L."/>
            <person name="Reinert K."/>
            <person name="Remington K.A."/>
            <person name="Clark A.G."/>
            <person name="Waterman M.S."/>
            <person name="Eichler E.E."/>
            <person name="Adams M.D."/>
            <person name="Hunkapiller M.W."/>
            <person name="Myers E.W."/>
            <person name="Venter J.C."/>
        </authorList>
    </citation>
    <scope>NUCLEOTIDE SEQUENCE [LARGE SCALE GENOMIC DNA]</scope>
</reference>
<reference key="8">
    <citation type="journal article" date="1988" name="Proc. Natl. Acad. Sci. U.S.A.">
        <title>The predicted DBL oncogene product defines a distinct class of transforming proteins.</title>
        <authorList>
            <person name="Eva A."/>
            <person name="Vecchio G."/>
            <person name="Rao C.D."/>
            <person name="Tronick S.R."/>
            <person name="Aaronson S.A."/>
        </authorList>
    </citation>
    <scope>NUCLEOTIDE SEQUENCE [MRNA] OF 498-925 (ISOFORM 1)</scope>
</reference>
<reference key="9">
    <citation type="journal article" date="1988" name="Oncogene">
        <title>Activation of a mcf.2 oncogene by deletion of amino-terminal coding sequences.</title>
        <authorList>
            <person name="Noguchi T."/>
            <person name="Galland F."/>
            <person name="Batoz M."/>
            <person name="Mattei M.-G."/>
            <person name="Birnbaum D."/>
        </authorList>
    </citation>
    <scope>NUCLEOTIDE SEQUENCE [MRNA] OF 398-925 (ISOFORM 1)</scope>
</reference>
<reference key="10">
    <citation type="journal article" date="1991" name="New Biol.">
        <title>A region of proto-dbl essential for its transforming activity shows sequence similarity to a yeast cell cycle gene, CDC24, and the human breakpoint cluster gene, bcr.</title>
        <authorList>
            <person name="Ron D."/>
            <person name="Zannini M."/>
            <person name="Lewis M."/>
            <person name="Wickner R.B."/>
            <person name="Hunt L.T."/>
            <person name="Graziani G."/>
            <person name="Tronick S.R."/>
            <person name="Aaronson S.A."/>
            <person name="Eva A."/>
        </authorList>
    </citation>
    <scope>DOMAIN DBL-HOMOLOGY</scope>
    <scope>MUTAGENESIS</scope>
</reference>
<reference key="11">
    <citation type="journal article" date="1994" name="J. Biol. Chem.">
        <title>Cellular transformation and guanine nucleotide exchange activity are catalyzed by a common domain on the dbl oncogene product.</title>
        <authorList>
            <person name="Hart M.J."/>
            <person name="Eva A."/>
            <person name="Zangrilli D."/>
            <person name="Aaronson S.A."/>
            <person name="Evans T."/>
            <person name="Cerione R.A."/>
            <person name="Zheng Y."/>
        </authorList>
    </citation>
    <scope>CHARACTERIZATION OF DBL DOMAIN</scope>
</reference>
<reference key="12">
    <citation type="journal article" date="2000" name="Biochem. Biophys. Res. Commun.">
        <title>Activation of the guanine nucleotide exchange factor Dbl following ACK1-dependent tyrosine phosphorylation.</title>
        <authorList>
            <person name="Kato J."/>
            <person name="Kaziro Y."/>
            <person name="Satoh T."/>
        </authorList>
    </citation>
    <scope>PHOSPHORYLATION BY TNK2</scope>
</reference>
<reference key="13">
    <citation type="journal article" date="2004" name="Cell. Signal.">
        <title>Role of the Sec14-like domain of Dbl family exchange factors in the regulation of Rho family GTPases in different subcellular sites.</title>
        <authorList>
            <person name="Ueda S."/>
            <person name="Kataoka T."/>
            <person name="Satoh T."/>
        </authorList>
    </citation>
    <scope>SUBCELLULAR LOCATION</scope>
    <scope>DOMAIN CRAL-TRIO</scope>
    <scope>INTERACTION WITH INOSITOL PHOSPHOLIPIDS</scope>
</reference>
<reference key="14">
    <citation type="journal article" date="2006" name="Mol. Cell. Biol.">
        <title>Ccpg1, a novel scaffold protein that regulates the activity of the Rho guanine nucleotide exchange factor Dbs.</title>
        <authorList>
            <person name="Kostenko E.V."/>
            <person name="Olabisi O.O."/>
            <person name="Sahay S."/>
            <person name="Rodriguez P.L."/>
            <person name="Whitehead I.P."/>
        </authorList>
    </citation>
    <scope>POSSIBLE INTERACTION WITH CCPG1</scope>
</reference>
<sequence length="925" mass="107673">MAEANPRRGKMRFRRNAASFPGNLHLVLVLRPTSFLQRTFTDIGFWFSQEDFMLKLPVVMLSSVSDLLTYIDDKQLTPELGGTLQYCHSEWIIFRNAIENFALTVKEMAQMLQSFGTELAETELPDDIPSIEEILAIRAERYHLLKNDITAVTKEGKILLTNLEVPDTEGAVSSRLECHRQISGDWQTINKLLTQVHDMETAFDGFWEKHQLKMEQYLQLWKFEQDFQQLVTEVEFLLNQQAELADVTGTIAQVKQKIKKLENLDENSQELLSKAQFVILHGHKLAANHHYALDLICQRCNELRYLSDILVNEIKAKRIQLSRTFKMHKLLQQARQCCDEGECLLANQEIDKFQSKEDAQKALQDIENFLEMALPFINYEPETLQYEFDVILSPELKVQMKTIQLKLENIRSIFENQQAGFRNLADKHVRPIQFVVPTPENLVTSGTPFFSSKQGKKTWRQNQSNLKIEVVPDCQEKRSSGPSSSLDNGNSLDVLKNHVLNELIQTERVYVRELYTVLLGYRAEMDNPEMFDLMPPLLRNKKDILFGNMAEIYEFHNDIFLSSLENCAHAPERVGPCFLERKDDFQMYAKYCQNKPRSETIWRKYSECAFFQECQRKLKHRLRLDSYLLKPVQRITKYQLLLKELLKYSKDCEGSALLKKALDAMLDLLKSVNDSMHQIAINGYIGNLNELGKMIMQGGFSVWIGHKKGATKMKDLARFKPMQRHLFLYEKAIVFCKRRVESGEGSDRYPSYSFKHCWKMDEVGITEYVKGDNRKFEIWYGEKEEVYIVQASNVDVKMTWLKEIRNILLKQQELLTVKKRKQQDQLTERDKFQISLQQNDEKQQGAFISTEETELEHTSTVVEVCEAIASVQAEANTVWTEASQSAEISEEPAEWSSNYFYPTYDENEEENRPLMRPVSEMALLY</sequence>
<keyword id="KW-0025">Alternative splicing</keyword>
<keyword id="KW-0963">Cytoplasm</keyword>
<keyword id="KW-0344">Guanine-nucleotide releasing factor</keyword>
<keyword id="KW-0472">Membrane</keyword>
<keyword id="KW-0597">Phosphoprotein</keyword>
<keyword id="KW-1267">Proteomics identification</keyword>
<keyword id="KW-0656">Proto-oncogene</keyword>
<keyword id="KW-1185">Reference proteome</keyword>
<organism>
    <name type="scientific">Homo sapiens</name>
    <name type="common">Human</name>
    <dbReference type="NCBI Taxonomy" id="9606"/>
    <lineage>
        <taxon>Eukaryota</taxon>
        <taxon>Metazoa</taxon>
        <taxon>Chordata</taxon>
        <taxon>Craniata</taxon>
        <taxon>Vertebrata</taxon>
        <taxon>Euteleostomi</taxon>
        <taxon>Mammalia</taxon>
        <taxon>Eutheria</taxon>
        <taxon>Euarchontoglires</taxon>
        <taxon>Primates</taxon>
        <taxon>Haplorrhini</taxon>
        <taxon>Catarrhini</taxon>
        <taxon>Hominidae</taxon>
        <taxon>Homo</taxon>
    </lineage>
</organism>
<protein>
    <recommendedName>
        <fullName>Proto-oncogene DBL</fullName>
    </recommendedName>
    <alternativeName>
        <fullName>Proto-oncogene MCF-2</fullName>
    </alternativeName>
    <component>
        <recommendedName>
            <fullName>MCF2-transforming protein</fullName>
        </recommendedName>
    </component>
    <component>
        <recommendedName>
            <fullName>DBL-transforming protein</fullName>
        </recommendedName>
    </component>
</protein>
<accession>P10911</accession>
<accession>B7Z3Y5</accession>
<accession>B7Z869</accession>
<accession>B7ZAV1</accession>
<accession>E9PH77</accession>
<accession>F5H091</accession>
<accession>P14919</accession>
<accession>Q5JYJ2</accession>
<accession>Q5JYJ3</accession>
<accession>Q5JYJ4</accession>
<accession>Q8IUF3</accession>
<accession>Q8IUF4</accession>
<accession>Q9UJB3</accession>
<proteinExistence type="evidence at protein level"/>
<dbReference type="EMBL" id="X12556">
    <property type="protein sequence ID" value="CAA31069.1"/>
    <property type="molecule type" value="mRNA"/>
</dbReference>
<dbReference type="EMBL" id="AB085901">
    <property type="protein sequence ID" value="BAC41200.1"/>
    <property type="molecule type" value="mRNA"/>
</dbReference>
<dbReference type="EMBL" id="AB085902">
    <property type="protein sequence ID" value="BAC41201.1"/>
    <property type="molecule type" value="mRNA"/>
</dbReference>
<dbReference type="EMBL" id="AL117234">
    <property type="protein sequence ID" value="CAB55301.1"/>
    <property type="molecule type" value="mRNA"/>
</dbReference>
<dbReference type="EMBL" id="AK296488">
    <property type="protein sequence ID" value="BAH12371.1"/>
    <property type="molecule type" value="mRNA"/>
</dbReference>
<dbReference type="EMBL" id="AK302957">
    <property type="protein sequence ID" value="BAH13855.1"/>
    <property type="molecule type" value="mRNA"/>
</dbReference>
<dbReference type="EMBL" id="AK316416">
    <property type="protein sequence ID" value="BAH14787.1"/>
    <property type="molecule type" value="mRNA"/>
</dbReference>
<dbReference type="EMBL" id="AL033403">
    <property type="status" value="NOT_ANNOTATED_CDS"/>
    <property type="molecule type" value="Genomic_DNA"/>
</dbReference>
<dbReference type="EMBL" id="AL161777">
    <property type="status" value="NOT_ANNOTATED_CDS"/>
    <property type="molecule type" value="Genomic_DNA"/>
</dbReference>
<dbReference type="EMBL" id="CH471150">
    <property type="protein sequence ID" value="EAW88427.1"/>
    <property type="molecule type" value="Genomic_DNA"/>
</dbReference>
<dbReference type="EMBL" id="CH471150">
    <property type="protein sequence ID" value="EAW88430.1"/>
    <property type="molecule type" value="Genomic_DNA"/>
</dbReference>
<dbReference type="EMBL" id="J03639">
    <property type="protein sequence ID" value="AAA52172.1"/>
    <property type="status" value="ALT_INIT"/>
    <property type="molecule type" value="mRNA"/>
</dbReference>
<dbReference type="EMBL" id="X13230">
    <property type="protein sequence ID" value="CAA31617.1"/>
    <property type="status" value="ALT_SEQ"/>
    <property type="molecule type" value="mRNA"/>
</dbReference>
<dbReference type="CCDS" id="CCDS14667.1">
    <molecule id="P10911-1"/>
</dbReference>
<dbReference type="CCDS" id="CCDS48175.1">
    <molecule id="P10911-3"/>
</dbReference>
<dbReference type="CCDS" id="CCDS55514.1">
    <molecule id="P10911-6"/>
</dbReference>
<dbReference type="CCDS" id="CCDS55515.1">
    <molecule id="P10911-2"/>
</dbReference>
<dbReference type="CCDS" id="CCDS55516.1">
    <molecule id="P10911-4"/>
</dbReference>
<dbReference type="CCDS" id="CCDS55517.1">
    <molecule id="P10911-5"/>
</dbReference>
<dbReference type="PIR" id="A28051">
    <property type="entry name" value="TVHUBD"/>
</dbReference>
<dbReference type="PIR" id="A30040">
    <property type="entry name" value="TVHUDB"/>
</dbReference>
<dbReference type="PIR" id="S10138">
    <property type="entry name" value="S10138"/>
</dbReference>
<dbReference type="RefSeq" id="NP_001093325.1">
    <molecule id="P10911-3"/>
    <property type="nucleotide sequence ID" value="NM_001099855.2"/>
</dbReference>
<dbReference type="RefSeq" id="NP_001165347.1">
    <molecule id="P10911-5"/>
    <property type="nucleotide sequence ID" value="NM_001171876.2"/>
</dbReference>
<dbReference type="RefSeq" id="NP_001165348.1">
    <molecule id="P10911-6"/>
    <property type="nucleotide sequence ID" value="NM_001171877.2"/>
</dbReference>
<dbReference type="RefSeq" id="NP_001165349.1">
    <molecule id="P10911-2"/>
    <property type="nucleotide sequence ID" value="NM_001171878.2"/>
</dbReference>
<dbReference type="RefSeq" id="NP_001165350.1">
    <molecule id="P10911-4"/>
    <property type="nucleotide sequence ID" value="NM_001171879.2"/>
</dbReference>
<dbReference type="RefSeq" id="NP_005360.3">
    <molecule id="P10911-1"/>
    <property type="nucleotide sequence ID" value="NM_005369.4"/>
</dbReference>
<dbReference type="RefSeq" id="XP_011529641.1">
    <molecule id="P10911-5"/>
    <property type="nucleotide sequence ID" value="XM_011531339.3"/>
</dbReference>
<dbReference type="RefSeq" id="XP_016885020.1">
    <molecule id="P10911-5"/>
    <property type="nucleotide sequence ID" value="XM_017029531.2"/>
</dbReference>
<dbReference type="RefSeq" id="XP_054183060.1">
    <molecule id="P10911-5"/>
    <property type="nucleotide sequence ID" value="XM_054327085.1"/>
</dbReference>
<dbReference type="RefSeq" id="XP_054183061.1">
    <molecule id="P10911-5"/>
    <property type="nucleotide sequence ID" value="XM_054327086.1"/>
</dbReference>
<dbReference type="SMR" id="P10911"/>
<dbReference type="BioGRID" id="110336">
    <property type="interactions" value="16"/>
</dbReference>
<dbReference type="CORUM" id="P10911"/>
<dbReference type="FunCoup" id="P10911">
    <property type="interactions" value="220"/>
</dbReference>
<dbReference type="IntAct" id="P10911">
    <property type="interactions" value="5"/>
</dbReference>
<dbReference type="MINT" id="P10911"/>
<dbReference type="STRING" id="9606.ENSP00000430276"/>
<dbReference type="ChEMBL" id="CHEMBL4523650"/>
<dbReference type="SwissLipids" id="SLP:000001545"/>
<dbReference type="GlyGen" id="P10911">
    <property type="glycosylation" value="1 site, 1 O-linked glycan (1 site)"/>
</dbReference>
<dbReference type="iPTMnet" id="P10911"/>
<dbReference type="PhosphoSitePlus" id="P10911"/>
<dbReference type="BioMuta" id="MCF2"/>
<dbReference type="DMDM" id="92087039"/>
<dbReference type="jPOST" id="P10911"/>
<dbReference type="MassIVE" id="P10911"/>
<dbReference type="PaxDb" id="9606-ENSP00000430276"/>
<dbReference type="PeptideAtlas" id="P10911"/>
<dbReference type="ProteomicsDB" id="20475"/>
<dbReference type="ProteomicsDB" id="25269"/>
<dbReference type="ProteomicsDB" id="52668">
    <molecule id="P10911-1"/>
</dbReference>
<dbReference type="ProteomicsDB" id="52669">
    <molecule id="P10911-2"/>
</dbReference>
<dbReference type="ProteomicsDB" id="52670">
    <molecule id="P10911-3"/>
</dbReference>
<dbReference type="ProteomicsDB" id="52671">
    <molecule id="P10911-4"/>
</dbReference>
<dbReference type="Antibodypedia" id="4174">
    <property type="antibodies" value="116 antibodies from 24 providers"/>
</dbReference>
<dbReference type="DNASU" id="4168"/>
<dbReference type="Ensembl" id="ENST00000338585.6">
    <molecule id="P10911-4"/>
    <property type="protein sequence ID" value="ENSP00000342204.6"/>
    <property type="gene ID" value="ENSG00000101977.22"/>
</dbReference>
<dbReference type="Ensembl" id="ENST00000370573.8">
    <molecule id="P10911-2"/>
    <property type="protein sequence ID" value="ENSP00000359605.4"/>
    <property type="gene ID" value="ENSG00000101977.22"/>
</dbReference>
<dbReference type="Ensembl" id="ENST00000370576.9">
    <molecule id="P10911-1"/>
    <property type="protein sequence ID" value="ENSP00000359608.4"/>
    <property type="gene ID" value="ENSG00000101977.22"/>
</dbReference>
<dbReference type="Ensembl" id="ENST00000414978.5">
    <molecule id="P10911-3"/>
    <property type="protein sequence ID" value="ENSP00000397055.1"/>
    <property type="gene ID" value="ENSG00000101977.22"/>
</dbReference>
<dbReference type="Ensembl" id="ENST00000519895.6">
    <molecule id="P10911-5"/>
    <property type="protein sequence ID" value="ENSP00000430276.1"/>
    <property type="gene ID" value="ENSG00000101977.22"/>
</dbReference>
<dbReference type="Ensembl" id="ENST00000536274.5">
    <molecule id="P10911-6"/>
    <property type="protein sequence ID" value="ENSP00000438155.1"/>
    <property type="gene ID" value="ENSG00000101977.22"/>
</dbReference>
<dbReference type="GeneID" id="4168"/>
<dbReference type="KEGG" id="hsa:4168"/>
<dbReference type="MANE-Select" id="ENST00000519895.6">
    <molecule id="P10911-5"/>
    <property type="protein sequence ID" value="ENSP00000430276.1"/>
    <property type="RefSeq nucleotide sequence ID" value="NM_001171876.2"/>
    <property type="RefSeq protein sequence ID" value="NP_001165347.1"/>
</dbReference>
<dbReference type="UCSC" id="uc004fau.4">
    <molecule id="P10911-1"/>
    <property type="organism name" value="human"/>
</dbReference>
<dbReference type="AGR" id="HGNC:6940"/>
<dbReference type="CTD" id="4168"/>
<dbReference type="DisGeNET" id="4168"/>
<dbReference type="GeneCards" id="MCF2"/>
<dbReference type="HGNC" id="HGNC:6940">
    <property type="gene designation" value="MCF2"/>
</dbReference>
<dbReference type="HPA" id="ENSG00000101977">
    <property type="expression patterns" value="Tissue enhanced (adrenal gland, brain, seminal vesicle, testis)"/>
</dbReference>
<dbReference type="MalaCards" id="MCF2"/>
<dbReference type="MIM" id="311030">
    <property type="type" value="gene"/>
</dbReference>
<dbReference type="neXtProt" id="NX_P10911"/>
<dbReference type="OpenTargets" id="ENSG00000101977"/>
<dbReference type="PharmGKB" id="PA30684"/>
<dbReference type="VEuPathDB" id="HostDB:ENSG00000101977"/>
<dbReference type="eggNOG" id="KOG4240">
    <property type="taxonomic scope" value="Eukaryota"/>
</dbReference>
<dbReference type="GeneTree" id="ENSGT00940000156974"/>
<dbReference type="HOGENOM" id="CLU_007130_1_0_1"/>
<dbReference type="InParanoid" id="P10911"/>
<dbReference type="OMA" id="HNRRWPG"/>
<dbReference type="OrthoDB" id="10004999at2759"/>
<dbReference type="PAN-GO" id="P10911">
    <property type="GO annotations" value="3 GO annotations based on evolutionary models"/>
</dbReference>
<dbReference type="PhylomeDB" id="P10911"/>
<dbReference type="TreeFam" id="TF318080"/>
<dbReference type="PathwayCommons" id="P10911"/>
<dbReference type="Reactome" id="R-HSA-193634">
    <property type="pathway name" value="Axonal growth inhibition (RHOA activation)"/>
</dbReference>
<dbReference type="Reactome" id="R-HSA-193648">
    <property type="pathway name" value="NRAGE signals death through JNK"/>
</dbReference>
<dbReference type="Reactome" id="R-HSA-416482">
    <property type="pathway name" value="G alpha (12/13) signalling events"/>
</dbReference>
<dbReference type="Reactome" id="R-HSA-8980692">
    <property type="pathway name" value="RHOA GTPase cycle"/>
</dbReference>
<dbReference type="Reactome" id="R-HSA-9013026">
    <property type="pathway name" value="RHOB GTPase cycle"/>
</dbReference>
<dbReference type="Reactome" id="R-HSA-9013106">
    <property type="pathway name" value="RHOC GTPase cycle"/>
</dbReference>
<dbReference type="Reactome" id="R-HSA-9013148">
    <property type="pathway name" value="CDC42 GTPase cycle"/>
</dbReference>
<dbReference type="Reactome" id="R-HSA-9013149">
    <property type="pathway name" value="RAC1 GTPase cycle"/>
</dbReference>
<dbReference type="Reactome" id="R-HSA-9013404">
    <property type="pathway name" value="RAC2 GTPase cycle"/>
</dbReference>
<dbReference type="Reactome" id="R-HSA-9013408">
    <property type="pathway name" value="RHOG GTPase cycle"/>
</dbReference>
<dbReference type="Reactome" id="R-HSA-9013423">
    <property type="pathway name" value="RAC3 GTPase cycle"/>
</dbReference>
<dbReference type="SignaLink" id="P10911"/>
<dbReference type="SIGNOR" id="P10911"/>
<dbReference type="BioGRID-ORCS" id="4168">
    <property type="hits" value="9 hits in 773 CRISPR screens"/>
</dbReference>
<dbReference type="ChiTaRS" id="MCF2">
    <property type="organism name" value="human"/>
</dbReference>
<dbReference type="GeneWiki" id="MCF2"/>
<dbReference type="GenomeRNAi" id="4168"/>
<dbReference type="Pharos" id="P10911">
    <property type="development level" value="Tbio"/>
</dbReference>
<dbReference type="PRO" id="PR:P10911"/>
<dbReference type="Proteomes" id="UP000005640">
    <property type="component" value="Chromosome X"/>
</dbReference>
<dbReference type="RNAct" id="P10911">
    <property type="molecule type" value="protein"/>
</dbReference>
<dbReference type="Bgee" id="ENSG00000101977">
    <property type="expression patterns" value="Expressed in adrenal tissue and 142 other cell types or tissues"/>
</dbReference>
<dbReference type="ExpressionAtlas" id="P10911">
    <property type="expression patterns" value="baseline and differential"/>
</dbReference>
<dbReference type="GO" id="GO:0005737">
    <property type="term" value="C:cytoplasm"/>
    <property type="evidence" value="ECO:0000318"/>
    <property type="project" value="GO_Central"/>
</dbReference>
<dbReference type="GO" id="GO:0005856">
    <property type="term" value="C:cytoskeleton"/>
    <property type="evidence" value="ECO:0000304"/>
    <property type="project" value="ProtInc"/>
</dbReference>
<dbReference type="GO" id="GO:0005829">
    <property type="term" value="C:cytosol"/>
    <property type="evidence" value="ECO:0000304"/>
    <property type="project" value="Reactome"/>
</dbReference>
<dbReference type="GO" id="GO:0016020">
    <property type="term" value="C:membrane"/>
    <property type="evidence" value="ECO:0000304"/>
    <property type="project" value="ProtInc"/>
</dbReference>
<dbReference type="GO" id="GO:0005085">
    <property type="term" value="F:guanyl-nucleotide exchange factor activity"/>
    <property type="evidence" value="ECO:0000318"/>
    <property type="project" value="GO_Central"/>
</dbReference>
<dbReference type="GO" id="GO:1990830">
    <property type="term" value="P:cellular response to leukemia inhibitory factor"/>
    <property type="evidence" value="ECO:0007669"/>
    <property type="project" value="Ensembl"/>
</dbReference>
<dbReference type="GO" id="GO:0016358">
    <property type="term" value="P:dendrite development"/>
    <property type="evidence" value="ECO:0000318"/>
    <property type="project" value="GO_Central"/>
</dbReference>
<dbReference type="GO" id="GO:0035556">
    <property type="term" value="P:intracellular signal transduction"/>
    <property type="evidence" value="ECO:0007669"/>
    <property type="project" value="InterPro"/>
</dbReference>
<dbReference type="GO" id="GO:0050771">
    <property type="term" value="P:negative regulation of axonogenesis"/>
    <property type="evidence" value="ECO:0000304"/>
    <property type="project" value="Reactome"/>
</dbReference>
<dbReference type="GO" id="GO:0051056">
    <property type="term" value="P:regulation of small GTPase mediated signal transduction"/>
    <property type="evidence" value="ECO:0000304"/>
    <property type="project" value="Reactome"/>
</dbReference>
<dbReference type="CDD" id="cd00160">
    <property type="entry name" value="RhoGEF"/>
    <property type="match status" value="1"/>
</dbReference>
<dbReference type="CDD" id="cd00176">
    <property type="entry name" value="SPEC"/>
    <property type="match status" value="1"/>
</dbReference>
<dbReference type="FunFam" id="2.30.29.30:FF:000078">
    <property type="entry name" value="Guanine nucleotide exchange factor DBS"/>
    <property type="match status" value="1"/>
</dbReference>
<dbReference type="FunFam" id="1.20.58.60:FF:000120">
    <property type="entry name" value="proto-oncogene DBL isoform X1"/>
    <property type="match status" value="1"/>
</dbReference>
<dbReference type="Gene3D" id="1.20.58.60">
    <property type="match status" value="1"/>
</dbReference>
<dbReference type="Gene3D" id="1.20.900.10">
    <property type="entry name" value="Dbl homology (DH) domain"/>
    <property type="match status" value="1"/>
</dbReference>
<dbReference type="Gene3D" id="2.30.29.30">
    <property type="entry name" value="Pleckstrin-homology domain (PH domain)/Phosphotyrosine-binding domain (PTB)"/>
    <property type="match status" value="1"/>
</dbReference>
<dbReference type="InterPro" id="IPR001251">
    <property type="entry name" value="CRAL-TRIO_dom"/>
</dbReference>
<dbReference type="InterPro" id="IPR035899">
    <property type="entry name" value="DBL_dom_sf"/>
</dbReference>
<dbReference type="InterPro" id="IPR000219">
    <property type="entry name" value="DH_dom"/>
</dbReference>
<dbReference type="InterPro" id="IPR001331">
    <property type="entry name" value="GDS_CDC24_CS"/>
</dbReference>
<dbReference type="InterPro" id="IPR011993">
    <property type="entry name" value="PH-like_dom_sf"/>
</dbReference>
<dbReference type="InterPro" id="IPR001849">
    <property type="entry name" value="PH_domain"/>
</dbReference>
<dbReference type="InterPro" id="IPR051336">
    <property type="entry name" value="RhoGEF_Guanine_NuclExch_SF"/>
</dbReference>
<dbReference type="InterPro" id="IPR055251">
    <property type="entry name" value="SOS1_NGEF_PH"/>
</dbReference>
<dbReference type="InterPro" id="IPR018159">
    <property type="entry name" value="Spectrin/alpha-actinin"/>
</dbReference>
<dbReference type="InterPro" id="IPR056466">
    <property type="entry name" value="Spectrin_DBS"/>
</dbReference>
<dbReference type="PANTHER" id="PTHR22826:SF146">
    <property type="entry name" value="PROTO-ONCOGENE DBL"/>
    <property type="match status" value="1"/>
</dbReference>
<dbReference type="PANTHER" id="PTHR22826">
    <property type="entry name" value="RHO GUANINE EXCHANGE FACTOR-RELATED"/>
    <property type="match status" value="1"/>
</dbReference>
<dbReference type="Pfam" id="PF13716">
    <property type="entry name" value="CRAL_TRIO_2"/>
    <property type="match status" value="1"/>
</dbReference>
<dbReference type="Pfam" id="PF00621">
    <property type="entry name" value="RhoGEF"/>
    <property type="match status" value="1"/>
</dbReference>
<dbReference type="Pfam" id="PF22697">
    <property type="entry name" value="SOS1_NGEF_PH"/>
    <property type="match status" value="1"/>
</dbReference>
<dbReference type="Pfam" id="PF23289">
    <property type="entry name" value="Spectrin_5"/>
    <property type="match status" value="1"/>
</dbReference>
<dbReference type="SMART" id="SM00233">
    <property type="entry name" value="PH"/>
    <property type="match status" value="1"/>
</dbReference>
<dbReference type="SMART" id="SM00325">
    <property type="entry name" value="RhoGEF"/>
    <property type="match status" value="1"/>
</dbReference>
<dbReference type="SMART" id="SM00150">
    <property type="entry name" value="SPEC"/>
    <property type="match status" value="1"/>
</dbReference>
<dbReference type="SUPFAM" id="SSF48065">
    <property type="entry name" value="DBL homology domain (DH-domain)"/>
    <property type="match status" value="1"/>
</dbReference>
<dbReference type="SUPFAM" id="SSF50729">
    <property type="entry name" value="PH domain-like"/>
    <property type="match status" value="1"/>
</dbReference>
<dbReference type="SUPFAM" id="SSF46966">
    <property type="entry name" value="Spectrin repeat"/>
    <property type="match status" value="1"/>
</dbReference>
<dbReference type="PROSITE" id="PS50191">
    <property type="entry name" value="CRAL_TRIO"/>
    <property type="match status" value="1"/>
</dbReference>
<dbReference type="PROSITE" id="PS00741">
    <property type="entry name" value="DH_1"/>
    <property type="match status" value="1"/>
</dbReference>
<dbReference type="PROSITE" id="PS50010">
    <property type="entry name" value="DH_2"/>
    <property type="match status" value="1"/>
</dbReference>
<dbReference type="PROSITE" id="PS50003">
    <property type="entry name" value="PH_DOMAIN"/>
    <property type="match status" value="1"/>
</dbReference>
<evidence type="ECO:0000255" key="1">
    <source>
        <dbReference type="PROSITE-ProRule" id="PRU00056"/>
    </source>
</evidence>
<evidence type="ECO:0000255" key="2">
    <source>
        <dbReference type="PROSITE-ProRule" id="PRU00062"/>
    </source>
</evidence>
<evidence type="ECO:0000255" key="3">
    <source>
        <dbReference type="PROSITE-ProRule" id="PRU00145"/>
    </source>
</evidence>
<evidence type="ECO:0000269" key="4">
    <source>
    </source>
</evidence>
<evidence type="ECO:0000269" key="5">
    <source>
    </source>
</evidence>
<evidence type="ECO:0000269" key="6">
    <source>
    </source>
</evidence>
<evidence type="ECO:0000269" key="7">
    <source>
    </source>
</evidence>
<evidence type="ECO:0000303" key="8">
    <source>
    </source>
</evidence>
<evidence type="ECO:0000303" key="9">
    <source>
    </source>
</evidence>
<evidence type="ECO:0000303" key="10">
    <source ref="4"/>
</evidence>
<evidence type="ECO:0000305" key="11"/>
<comment type="function">
    <text>Guanine nucleotide exchange factor (GEF) that modulates the Rho family of GTPases. Promotes the conversion of some member of the Rho family GTPase from the GDP-bound to the GTP-bound form. Isoform 1 exhibits no activity toward RHOA, RAC1 or CDC42. Isoform 2 exhibits decreased GEF activity toward CDC42. Isoform 3 exhibits a weak but significant activity toward RAC1 and CDC42. Isoform 4 exhibits significant activity toward RHOA and CDC42. The truncated DBL oncogene is active toward RHOA, RAC1 and CDC42.</text>
</comment>
<comment type="subunit">
    <text evidence="6">Interacts with an array of inositol phospholipids such as phosphatidylinositol 3-phosphate (PI3P), phosphatidylinositol 4-phosphate (PI4P) and phosphatidylinositol 5-phosphate (PI5P). May interact with CCPG1.</text>
</comment>
<comment type="interaction">
    <interactant intactId="EBI-1914514">
        <id>P10911</id>
    </interactant>
    <interactant intactId="EBI-741141">
        <id>P15531</id>
        <label>NME1</label>
    </interactant>
    <organismsDiffer>false</organismsDiffer>
    <experiments>4</experiments>
</comment>
<comment type="interaction">
    <interactant intactId="EBI-1915491">
        <id>PRO_0000030434</id>
    </interactant>
    <interactant intactId="EBI-741141">
        <id>P15531</id>
        <label>NME1</label>
    </interactant>
    <organismsDiffer>false</organismsDiffer>
    <experiments>9</experiments>
</comment>
<comment type="subcellular location">
    <subcellularLocation>
        <location evidence="6">Cytoplasm</location>
    </subcellularLocation>
</comment>
<comment type="subcellular location">
    <molecule>Isoform 1</molecule>
    <subcellularLocation>
        <location>Membrane</location>
    </subcellularLocation>
</comment>
<comment type="subcellular location">
    <molecule>Isoform 3</molecule>
    <subcellularLocation>
        <location>Membrane</location>
    </subcellularLocation>
    <text>Colocalizes with CDC42 to plasma membrane.</text>
</comment>
<comment type="alternative products">
    <event type="alternative splicing"/>
    <isoform>
        <id>P10911-1</id>
        <name>1</name>
        <name>Var.1</name>
        <sequence type="displayed"/>
    </isoform>
    <isoform>
        <id>P10911-2</id>
        <name>2</name>
        <name>Var.2</name>
        <sequence type="described" ref="VSP_008151 VSP_008152"/>
    </isoform>
    <isoform>
        <id>P10911-3</id>
        <name>3</name>
        <name>Var.3</name>
        <sequence type="described" ref="VSP_008150"/>
    </isoform>
    <isoform>
        <id>P10911-4</id>
        <name>4</name>
        <name>Var.4</name>
        <sequence type="described" ref="VSP_008153"/>
    </isoform>
    <isoform>
        <id>P10911-5</id>
        <name>5</name>
        <sequence type="described" ref="VSP_008150 VSP_008153"/>
    </isoform>
    <isoform>
        <id>P10911-6</id>
        <name>6</name>
        <sequence type="described" ref="VSP_046118 VSP_008151 VSP_008152"/>
    </isoform>
</comment>
<comment type="tissue specificity">
    <text evidence="5">Isoform 1 is expressed only in brain. Isoform 3 is expressed in heart, kidney, spleen, liver and testis. Isoform 4 is expressed in brain, heart, kidney, testis, placenta, stomach and peripheral blood. The protein is detectable in brain, heart, kidney, intestine, muscle, lung and testis.</text>
</comment>
<comment type="domain">
    <text>The CRAL-TRIO domain is involved in interaction with inositol phospholipids.</text>
</comment>
<comment type="domain">
    <text>The DH domain is essential for transforming activity and directly catalyzes GDP-GTP exchange activity. It may interact with CCPG1.</text>
</comment>
<comment type="PTM">
    <text evidence="4">Phosphorylation by TNK2 enhances guanine nucleotide exchange factor (GEF) activity toward Rho family proteins.</text>
</comment>
<comment type="disease">
    <text evidence="11">MCF2 and DBL represent two activated versions of the same proto-oncogene.</text>
</comment>
<comment type="similarity">
    <text evidence="11">Belongs to the MCF2 family.</text>
</comment>
<comment type="sequence caution" evidence="11">
    <conflict type="erroneous initiation">
        <sequence resource="EMBL-CDS" id="AAA52172"/>
    </conflict>
</comment>
<feature type="chain" id="PRO_0000030432" description="Proto-oncogene DBL">
    <location>
        <begin position="1"/>
        <end position="925"/>
    </location>
</feature>
<feature type="chain" id="PRO_0000030433" description="MCF2-transforming protein">
    <location>
        <begin position="398"/>
        <end position="925"/>
    </location>
</feature>
<feature type="chain" id="PRO_0000030434" description="DBL-transforming protein">
    <location>
        <begin position="498"/>
        <end position="925"/>
    </location>
</feature>
<feature type="domain" description="CRAL-TRIO" evidence="1">
    <location>
        <begin position="1"/>
        <end position="88"/>
    </location>
</feature>
<feature type="repeat" description="Spectrin">
    <location>
        <begin position="221"/>
        <end position="322"/>
    </location>
</feature>
<feature type="domain" description="DH" evidence="2">
    <location>
        <begin position="495"/>
        <end position="675"/>
    </location>
</feature>
<feature type="domain" description="PH" evidence="3">
    <location>
        <begin position="687"/>
        <end position="809"/>
    </location>
</feature>
<feature type="splice variant" id="VSP_008150" description="In isoform 3 and isoform 5." evidence="8 9 10">
    <original>MAEANPRRGKMRFRRNA</original>
    <variation>MQDIAFLSGGRGKDNAWIITFPENCNFRCIPEEVIAKVLTYLTSIARQNGSDSRFTIILDRRLDTWSSLKISLQKIS</variation>
    <location>
        <begin position="1"/>
        <end position="17"/>
    </location>
</feature>
<feature type="splice variant" id="VSP_046118" description="In isoform 6." evidence="9">
    <location>
        <begin position="58"/>
        <end position="96"/>
    </location>
</feature>
<feature type="splice variant" id="VSP_008153" description="In isoform 4 and isoform 5." evidence="8 9">
    <original>Q</original>
    <variation>QVGVGYSFFQACKLFSK</variation>
    <location>
        <position position="454"/>
    </location>
</feature>
<feature type="splice variant" id="VSP_008151" description="In isoform 2 and isoform 6." evidence="8 9">
    <original>KQQGAFISTEETELEHTST</original>
    <variation>DLCRRWLSYIDEATMSNGK</variation>
    <location>
        <begin position="842"/>
        <end position="860"/>
    </location>
</feature>
<feature type="splice variant" id="VSP_008152" description="In isoform 2 and isoform 6." evidence="8 9">
    <location>
        <begin position="861"/>
        <end position="925"/>
    </location>
</feature>
<feature type="mutagenesis site" description="Transformation capability reduced; no stimulation of GDP dissociation." evidence="7">
    <original>LLLKELL</original>
    <variation>IIIRDII</variation>
    <location>
        <begin position="640"/>
        <end position="646"/>
    </location>
</feature>
<feature type="sequence conflict" description="In Ref. 1 and 3." evidence="11" ref="1 3">
    <original>L</original>
    <variation>P</variation>
    <location>
        <position position="54"/>
    </location>
</feature>
<feature type="sequence conflict" description="In Ref. 5; BAH12371." evidence="11" ref="5">
    <original>C</original>
    <variation>S</variation>
    <location>
        <position position="178"/>
    </location>
</feature>
<feature type="sequence conflict" description="In Ref. 5; BAH14787." evidence="11" ref="5">
    <original>L</original>
    <variation>F</variation>
    <location>
        <position position="330"/>
    </location>
</feature>
<feature type="sequence conflict" description="In Ref. 5; BAH12371." evidence="11" ref="5">
    <original>D</original>
    <variation>Y</variation>
    <location>
        <position position="358"/>
    </location>
</feature>
<feature type="sequence conflict" description="In Ref. 8." evidence="11" ref="8">
    <original>R</original>
    <variation>Q</variation>
    <location>
        <position position="634"/>
    </location>
</feature>
<feature type="sequence conflict" description="In Ref. 5; BAH14787." evidence="11" ref="5">
    <original>N</original>
    <variation>I</variation>
    <location>
        <position position="687"/>
    </location>
</feature>
<feature type="sequence conflict" description="In Ref. 9." evidence="11" ref="9">
    <original>A</original>
    <variation>V</variation>
    <location>
        <position position="886"/>
    </location>
</feature>
<feature type="sequence conflict" description="In Ref. 5; BAH13855." evidence="11" ref="5">
    <original>F</original>
    <variation>S</variation>
    <location>
        <position position="900"/>
    </location>
</feature>
<gene>
    <name type="primary">MCF2</name>
    <name type="synonym">DBL</name>
</gene>